<evidence type="ECO:0000255" key="1">
    <source>
        <dbReference type="HAMAP-Rule" id="MF_00500"/>
    </source>
</evidence>
<evidence type="ECO:0000256" key="2">
    <source>
        <dbReference type="SAM" id="MobiDB-lite"/>
    </source>
</evidence>
<evidence type="ECO:0000305" key="3"/>
<keyword id="KW-0687">Ribonucleoprotein</keyword>
<keyword id="KW-0689">Ribosomal protein</keyword>
<keyword id="KW-0694">RNA-binding</keyword>
<keyword id="KW-0699">rRNA-binding</keyword>
<name>RS20_ECOBW</name>
<protein>
    <recommendedName>
        <fullName evidence="1">Small ribosomal subunit protein bS20</fullName>
    </recommendedName>
    <alternativeName>
        <fullName evidence="3">30S ribosomal protein S20</fullName>
    </alternativeName>
</protein>
<accession>C4ZPU9</accession>
<reference key="1">
    <citation type="journal article" date="2009" name="J. Bacteriol.">
        <title>Genomic sequencing reveals regulatory mutations and recombinational events in the widely used MC4100 lineage of Escherichia coli K-12.</title>
        <authorList>
            <person name="Ferenci T."/>
            <person name="Zhou Z."/>
            <person name="Betteridge T."/>
            <person name="Ren Y."/>
            <person name="Liu Y."/>
            <person name="Feng L."/>
            <person name="Reeves P.R."/>
            <person name="Wang L."/>
        </authorList>
    </citation>
    <scope>NUCLEOTIDE SEQUENCE [LARGE SCALE GENOMIC DNA]</scope>
    <source>
        <strain>K12 / MC4100 / BW2952</strain>
    </source>
</reference>
<organism>
    <name type="scientific">Escherichia coli (strain K12 / MC4100 / BW2952)</name>
    <dbReference type="NCBI Taxonomy" id="595496"/>
    <lineage>
        <taxon>Bacteria</taxon>
        <taxon>Pseudomonadati</taxon>
        <taxon>Pseudomonadota</taxon>
        <taxon>Gammaproteobacteria</taxon>
        <taxon>Enterobacterales</taxon>
        <taxon>Enterobacteriaceae</taxon>
        <taxon>Escherichia</taxon>
    </lineage>
</organism>
<sequence length="87" mass="9684">MANIKSAKKRAIQSEKARKHNASRRSMMRTFIKKVYAAIEAGDKAAAQKAFNEMQPIVDRQAAKGLIHKNKAARHKANLTAQINKLA</sequence>
<proteinExistence type="inferred from homology"/>
<gene>
    <name evidence="1" type="primary">rpsT</name>
    <name type="ordered locus">BWG_0021</name>
</gene>
<dbReference type="EMBL" id="CP001396">
    <property type="protein sequence ID" value="ACR61793.1"/>
    <property type="molecule type" value="Genomic_DNA"/>
</dbReference>
<dbReference type="RefSeq" id="WP_001274021.1">
    <property type="nucleotide sequence ID" value="NC_012759.1"/>
</dbReference>
<dbReference type="SMR" id="C4ZPU9"/>
<dbReference type="GeneID" id="93777413"/>
<dbReference type="KEGG" id="ebw:BWG_0021"/>
<dbReference type="HOGENOM" id="CLU_160655_4_0_6"/>
<dbReference type="GO" id="GO:0005829">
    <property type="term" value="C:cytosol"/>
    <property type="evidence" value="ECO:0007669"/>
    <property type="project" value="TreeGrafter"/>
</dbReference>
<dbReference type="GO" id="GO:0015935">
    <property type="term" value="C:small ribosomal subunit"/>
    <property type="evidence" value="ECO:0007669"/>
    <property type="project" value="TreeGrafter"/>
</dbReference>
<dbReference type="GO" id="GO:0070181">
    <property type="term" value="F:small ribosomal subunit rRNA binding"/>
    <property type="evidence" value="ECO:0007669"/>
    <property type="project" value="TreeGrafter"/>
</dbReference>
<dbReference type="GO" id="GO:0003735">
    <property type="term" value="F:structural constituent of ribosome"/>
    <property type="evidence" value="ECO:0007669"/>
    <property type="project" value="InterPro"/>
</dbReference>
<dbReference type="GO" id="GO:0006412">
    <property type="term" value="P:translation"/>
    <property type="evidence" value="ECO:0007669"/>
    <property type="project" value="UniProtKB-UniRule"/>
</dbReference>
<dbReference type="FunFam" id="1.20.58.110:FF:000001">
    <property type="entry name" value="30S ribosomal protein S20"/>
    <property type="match status" value="1"/>
</dbReference>
<dbReference type="Gene3D" id="1.20.58.110">
    <property type="entry name" value="Ribosomal protein S20"/>
    <property type="match status" value="1"/>
</dbReference>
<dbReference type="HAMAP" id="MF_00500">
    <property type="entry name" value="Ribosomal_bS20"/>
    <property type="match status" value="1"/>
</dbReference>
<dbReference type="InterPro" id="IPR002583">
    <property type="entry name" value="Ribosomal_bS20"/>
</dbReference>
<dbReference type="InterPro" id="IPR036510">
    <property type="entry name" value="Ribosomal_bS20_sf"/>
</dbReference>
<dbReference type="NCBIfam" id="TIGR00029">
    <property type="entry name" value="S20"/>
    <property type="match status" value="1"/>
</dbReference>
<dbReference type="PANTHER" id="PTHR33398">
    <property type="entry name" value="30S RIBOSOMAL PROTEIN S20"/>
    <property type="match status" value="1"/>
</dbReference>
<dbReference type="PANTHER" id="PTHR33398:SF1">
    <property type="entry name" value="SMALL RIBOSOMAL SUBUNIT PROTEIN BS20C"/>
    <property type="match status" value="1"/>
</dbReference>
<dbReference type="Pfam" id="PF01649">
    <property type="entry name" value="Ribosomal_S20p"/>
    <property type="match status" value="1"/>
</dbReference>
<dbReference type="SUPFAM" id="SSF46992">
    <property type="entry name" value="Ribosomal protein S20"/>
    <property type="match status" value="1"/>
</dbReference>
<comment type="function">
    <text evidence="1">Binds directly to 16S ribosomal RNA.</text>
</comment>
<comment type="similarity">
    <text evidence="1">Belongs to the bacterial ribosomal protein bS20 family.</text>
</comment>
<feature type="chain" id="PRO_1000206497" description="Small ribosomal subunit protein bS20">
    <location>
        <begin position="1"/>
        <end position="87"/>
    </location>
</feature>
<feature type="region of interest" description="Disordered" evidence="2">
    <location>
        <begin position="1"/>
        <end position="26"/>
    </location>
</feature>